<protein>
    <recommendedName>
        <fullName>Histone H2A.V</fullName>
    </recommendedName>
    <alternativeName>
        <fullName>H2A.F/Z</fullName>
    </alternativeName>
</protein>
<name>H2AV_XENTR</name>
<sequence length="128" mass="13509">MAGGKAGKDSGKAKAKAVSRSQRAGLQFPVGRIHRHLKTRTTSHGRVGATAAVYSAAILEYLTAEVLELAGNASKDLKVKRITPRHLQLAIRGDEELDSLIKATIAGGGVIPHIHKSLIGKKGQQKTA</sequence>
<reference key="1">
    <citation type="submission" date="2006-03" db="EMBL/GenBank/DDBJ databases">
        <authorList>
            <consortium name="Sanger Xenopus tropicalis EST/cDNA project"/>
        </authorList>
    </citation>
    <scope>NUCLEOTIDE SEQUENCE [LARGE SCALE MRNA]</scope>
    <source>
        <tissue>Gastrula</tissue>
    </source>
</reference>
<reference key="2">
    <citation type="submission" date="2005-03" db="EMBL/GenBank/DDBJ databases">
        <authorList>
            <consortium name="NIH - Xenopus Gene Collection (XGC) project"/>
        </authorList>
    </citation>
    <scope>NUCLEOTIDE SEQUENCE [LARGE SCALE MRNA]</scope>
    <source>
        <tissue>Embryo</tissue>
    </source>
</reference>
<gene>
    <name type="primary">h2az2</name>
    <name type="ORF">TGas096d24.1</name>
</gene>
<evidence type="ECO:0000250" key="1"/>
<evidence type="ECO:0000250" key="2">
    <source>
        <dbReference type="UniProtKB" id="P0C0S5"/>
    </source>
</evidence>
<evidence type="ECO:0000256" key="3">
    <source>
        <dbReference type="SAM" id="MobiDB-lite"/>
    </source>
</evidence>
<evidence type="ECO:0000305" key="4"/>
<dbReference type="EMBL" id="CR761860">
    <property type="protein sequence ID" value="CAJ81609.1"/>
    <property type="molecule type" value="mRNA"/>
</dbReference>
<dbReference type="EMBL" id="BC091605">
    <property type="protein sequence ID" value="AAH91605.1"/>
    <property type="molecule type" value="mRNA"/>
</dbReference>
<dbReference type="RefSeq" id="NP_001016178.1">
    <property type="nucleotide sequence ID" value="NM_001016178.2"/>
</dbReference>
<dbReference type="SMR" id="Q5BJ65"/>
<dbReference type="FunCoup" id="Q5BJ65">
    <property type="interactions" value="2231"/>
</dbReference>
<dbReference type="STRING" id="8364.ENSXETP00000013001"/>
<dbReference type="PaxDb" id="8364-ENSXETP00000002709"/>
<dbReference type="DNASU" id="548932"/>
<dbReference type="GeneID" id="548932"/>
<dbReference type="KEGG" id="xtr:548932"/>
<dbReference type="AGR" id="Xenbase:XB-GENE-964016"/>
<dbReference type="CTD" id="94239"/>
<dbReference type="Xenbase" id="XB-GENE-964016">
    <property type="gene designation" value="h2az2"/>
</dbReference>
<dbReference type="eggNOG" id="KOG1757">
    <property type="taxonomic scope" value="Eukaryota"/>
</dbReference>
<dbReference type="HOGENOM" id="CLU_062828_2_2_1"/>
<dbReference type="InParanoid" id="Q5BJ65"/>
<dbReference type="OMA" id="MNKKGAP"/>
<dbReference type="OrthoDB" id="205514at2759"/>
<dbReference type="PhylomeDB" id="Q5BJ65"/>
<dbReference type="TreeFam" id="TF354232"/>
<dbReference type="Reactome" id="R-XTR-110330">
    <property type="pathway name" value="Recognition and association of DNA glycosylase with site containing an affected purine"/>
</dbReference>
<dbReference type="Reactome" id="R-XTR-110331">
    <property type="pathway name" value="Cleavage of the damaged purine"/>
</dbReference>
<dbReference type="Reactome" id="R-XTR-171306">
    <property type="pathway name" value="Packaging Of Telomere Ends"/>
</dbReference>
<dbReference type="Reactome" id="R-XTR-212300">
    <property type="pathway name" value="PRC2 methylates histones and DNA"/>
</dbReference>
<dbReference type="Reactome" id="R-XTR-2299718">
    <property type="pathway name" value="Condensation of Prophase Chromosomes"/>
</dbReference>
<dbReference type="Reactome" id="R-XTR-2559580">
    <property type="pathway name" value="Oxidative Stress Induced Senescence"/>
</dbReference>
<dbReference type="Reactome" id="R-XTR-2559582">
    <property type="pathway name" value="Senescence-Associated Secretory Phenotype (SASP)"/>
</dbReference>
<dbReference type="Reactome" id="R-XTR-2559586">
    <property type="pathway name" value="DNA Damage/Telomere Stress Induced Senescence"/>
</dbReference>
<dbReference type="Reactome" id="R-XTR-3214858">
    <property type="pathway name" value="RMTs methylate histone arginines"/>
</dbReference>
<dbReference type="Reactome" id="R-XTR-427413">
    <property type="pathway name" value="NoRC negatively regulates rRNA expression"/>
</dbReference>
<dbReference type="Reactome" id="R-XTR-5578749">
    <property type="pathway name" value="Transcriptional regulation by small RNAs"/>
</dbReference>
<dbReference type="Reactome" id="R-XTR-68616">
    <property type="pathway name" value="Assembly of the ORC complex at the origin of replication"/>
</dbReference>
<dbReference type="Reactome" id="R-XTR-73728">
    <property type="pathway name" value="RNA Polymerase I Promoter Opening"/>
</dbReference>
<dbReference type="Reactome" id="R-XTR-8936459">
    <property type="pathway name" value="RUNX1 regulates genes involved in megakaryocyte differentiation and platelet function"/>
</dbReference>
<dbReference type="Reactome" id="R-XTR-9018519">
    <property type="pathway name" value="Estrogen-dependent gene expression"/>
</dbReference>
<dbReference type="Reactome" id="R-XTR-9841922">
    <property type="pathway name" value="MLL4 and MLL3 complexes regulate expression of PPARG target genes in adipogenesis and hepatic steatosis"/>
</dbReference>
<dbReference type="Proteomes" id="UP000008143">
    <property type="component" value="Chromosome 3"/>
</dbReference>
<dbReference type="Bgee" id="ENSXETG00000001258">
    <property type="expression patterns" value="Expressed in testis and 19 other cell types or tissues"/>
</dbReference>
<dbReference type="GO" id="GO:0000786">
    <property type="term" value="C:nucleosome"/>
    <property type="evidence" value="ECO:0007669"/>
    <property type="project" value="UniProtKB-KW"/>
</dbReference>
<dbReference type="GO" id="GO:0005634">
    <property type="term" value="C:nucleus"/>
    <property type="evidence" value="ECO:0007669"/>
    <property type="project" value="UniProtKB-SubCell"/>
</dbReference>
<dbReference type="GO" id="GO:0003677">
    <property type="term" value="F:DNA binding"/>
    <property type="evidence" value="ECO:0007669"/>
    <property type="project" value="UniProtKB-KW"/>
</dbReference>
<dbReference type="GO" id="GO:0046982">
    <property type="term" value="F:protein heterodimerization activity"/>
    <property type="evidence" value="ECO:0007669"/>
    <property type="project" value="InterPro"/>
</dbReference>
<dbReference type="GO" id="GO:0030527">
    <property type="term" value="F:structural constituent of chromatin"/>
    <property type="evidence" value="ECO:0007669"/>
    <property type="project" value="InterPro"/>
</dbReference>
<dbReference type="CDD" id="cd00074">
    <property type="entry name" value="HFD_H2A"/>
    <property type="match status" value="1"/>
</dbReference>
<dbReference type="FunFam" id="1.10.20.10:FF:000005">
    <property type="entry name" value="Histone H2A"/>
    <property type="match status" value="1"/>
</dbReference>
<dbReference type="Gene3D" id="1.10.20.10">
    <property type="entry name" value="Histone, subunit A"/>
    <property type="match status" value="1"/>
</dbReference>
<dbReference type="InterPro" id="IPR009072">
    <property type="entry name" value="Histone-fold"/>
</dbReference>
<dbReference type="InterPro" id="IPR002119">
    <property type="entry name" value="Histone_H2A"/>
</dbReference>
<dbReference type="InterPro" id="IPR007125">
    <property type="entry name" value="Histone_H2A/H2B/H3"/>
</dbReference>
<dbReference type="InterPro" id="IPR032454">
    <property type="entry name" value="Histone_H2A_C"/>
</dbReference>
<dbReference type="InterPro" id="IPR032458">
    <property type="entry name" value="Histone_H2A_CS"/>
</dbReference>
<dbReference type="PANTHER" id="PTHR23430">
    <property type="entry name" value="HISTONE H2A"/>
    <property type="match status" value="1"/>
</dbReference>
<dbReference type="Pfam" id="PF00125">
    <property type="entry name" value="Histone"/>
    <property type="match status" value="1"/>
</dbReference>
<dbReference type="Pfam" id="PF16211">
    <property type="entry name" value="Histone_H2A_C"/>
    <property type="match status" value="1"/>
</dbReference>
<dbReference type="PRINTS" id="PR00620">
    <property type="entry name" value="HISTONEH2A"/>
</dbReference>
<dbReference type="SMART" id="SM00414">
    <property type="entry name" value="H2A"/>
    <property type="match status" value="1"/>
</dbReference>
<dbReference type="SUPFAM" id="SSF47113">
    <property type="entry name" value="Histone-fold"/>
    <property type="match status" value="1"/>
</dbReference>
<dbReference type="PROSITE" id="PS00046">
    <property type="entry name" value="HISTONE_H2A"/>
    <property type="match status" value="1"/>
</dbReference>
<feature type="initiator methionine" description="Removed" evidence="1">
    <location>
        <position position="1"/>
    </location>
</feature>
<feature type="chain" id="PRO_0000055307" description="Histone H2A.V">
    <location>
        <begin position="2"/>
        <end position="128"/>
    </location>
</feature>
<feature type="region of interest" description="Disordered" evidence="3">
    <location>
        <begin position="1"/>
        <end position="23"/>
    </location>
</feature>
<feature type="compositionally biased region" description="Basic and acidic residues" evidence="3">
    <location>
        <begin position="1"/>
        <end position="12"/>
    </location>
</feature>
<feature type="modified residue" description="N6-acetyllysine" evidence="1">
    <location>
        <position position="5"/>
    </location>
</feature>
<feature type="modified residue" description="N6-acetyllysine" evidence="1">
    <location>
        <position position="8"/>
    </location>
</feature>
<feature type="modified residue" description="N6-acetyllysine" evidence="1">
    <location>
        <position position="12"/>
    </location>
</feature>
<feature type="modified residue" description="N6-lactoyllysine; alternate" evidence="2">
    <location>
        <position position="12"/>
    </location>
</feature>
<feature type="modified residue" description="N6-lactoyllysine; alternate" evidence="2">
    <location>
        <position position="14"/>
    </location>
</feature>
<feature type="modified residue" description="N6-lactoyllysine" evidence="2">
    <location>
        <position position="116"/>
    </location>
</feature>
<feature type="cross-link" description="Glycyl lysine isopeptide (Lys-Gly) (interchain with G-Cter in ubiquitin)" evidence="1">
    <location>
        <position position="122"/>
    </location>
</feature>
<comment type="function">
    <text evidence="1">Variant histone H2A which replaces conventional H2A in a subset of nucleosomes. Nucleosomes wrap and compact DNA into chromatin, limiting DNA accessibility to the cellular machineries which require DNA as a template. Histones thereby play a central role in transcription regulation, DNA repair, DNA replication and chromosomal stability. DNA accessibility is regulated via a complex set of post-translational modifications of histones, also called histone code, and nucleosome remodeling. May be involved in the formation of constitutive heterochromatin. May be required for chromosome segregation during cell division (By similarity).</text>
</comment>
<comment type="subunit">
    <text evidence="1">The nucleosome is a histone octamer containing two molecules each of H2A, H2B, H3 and H4 assembled in one H3-H4 heterotetramer and two H2A-H2B heterodimers. The octamer wraps approximately 147 bp of DNA. H2A or its variant H2AZ2 forms a heterodimer with H2B (By similarity).</text>
</comment>
<comment type="subcellular location">
    <subcellularLocation>
        <location evidence="1">Nucleus</location>
    </subcellularLocation>
    <subcellularLocation>
        <location evidence="1">Chromosome</location>
    </subcellularLocation>
</comment>
<comment type="PTM">
    <text evidence="1">Monoubiquitination of Lys-122 gives a specific tag for epigenetic transcriptional repression.</text>
</comment>
<comment type="PTM">
    <text evidence="1">Acetylated on Lys-5, Lys-8 and Lys-12 when associated with the 5'-end of active genes.</text>
</comment>
<comment type="similarity">
    <text evidence="4">Belongs to the histone H2A family.</text>
</comment>
<keyword id="KW-0007">Acetylation</keyword>
<keyword id="KW-0158">Chromosome</keyword>
<keyword id="KW-0238">DNA-binding</keyword>
<keyword id="KW-1017">Isopeptide bond</keyword>
<keyword id="KW-0544">Nucleosome core</keyword>
<keyword id="KW-0539">Nucleus</keyword>
<keyword id="KW-1185">Reference proteome</keyword>
<keyword id="KW-0832">Ubl conjugation</keyword>
<proteinExistence type="evidence at transcript level"/>
<organism>
    <name type="scientific">Xenopus tropicalis</name>
    <name type="common">Western clawed frog</name>
    <name type="synonym">Silurana tropicalis</name>
    <dbReference type="NCBI Taxonomy" id="8364"/>
    <lineage>
        <taxon>Eukaryota</taxon>
        <taxon>Metazoa</taxon>
        <taxon>Chordata</taxon>
        <taxon>Craniata</taxon>
        <taxon>Vertebrata</taxon>
        <taxon>Euteleostomi</taxon>
        <taxon>Amphibia</taxon>
        <taxon>Batrachia</taxon>
        <taxon>Anura</taxon>
        <taxon>Pipoidea</taxon>
        <taxon>Pipidae</taxon>
        <taxon>Xenopodinae</taxon>
        <taxon>Xenopus</taxon>
        <taxon>Silurana</taxon>
    </lineage>
</organism>
<accession>Q5BJ65</accession>
<accession>Q28FN8</accession>